<protein>
    <recommendedName>
        <fullName evidence="1">6,7-dimethyl-8-ribityllumazine synthase</fullName>
        <shortName evidence="1">DMRL synthase</shortName>
        <shortName evidence="1">LS</shortName>
        <shortName evidence="1">Lumazine synthase</shortName>
        <ecNumber evidence="1">2.5.1.78</ecNumber>
    </recommendedName>
</protein>
<sequence length="158" mass="16420">MTLKTIEGTFIAPKGRYALVVGRFNSFVVESLVSGAVDALVRHGVSESDITIIRAPGAFEIPLVAQKVAQQGAYDAIIALGAVIRGGTPHFEYVAGECTKGLAQVSMEFGVPVAFGVLTVDSIEQAIERSGTKAGNKGAEAALSALEMVSLLAQLEAK</sequence>
<reference key="1">
    <citation type="journal article" date="2006" name="Nat. Biotechnol.">
        <title>Complete genome sequence of the entomopathogenic and metabolically versatile soil bacterium Pseudomonas entomophila.</title>
        <authorList>
            <person name="Vodovar N."/>
            <person name="Vallenet D."/>
            <person name="Cruveiller S."/>
            <person name="Rouy Z."/>
            <person name="Barbe V."/>
            <person name="Acosta C."/>
            <person name="Cattolico L."/>
            <person name="Jubin C."/>
            <person name="Lajus A."/>
            <person name="Segurens B."/>
            <person name="Vacherie B."/>
            <person name="Wincker P."/>
            <person name="Weissenbach J."/>
            <person name="Lemaitre B."/>
            <person name="Medigue C."/>
            <person name="Boccard F."/>
        </authorList>
    </citation>
    <scope>NUCLEOTIDE SEQUENCE [LARGE SCALE GENOMIC DNA]</scope>
    <source>
        <strain>L48</strain>
    </source>
</reference>
<feature type="chain" id="PRO_1000040488" description="6,7-dimethyl-8-ribityllumazine synthase">
    <location>
        <begin position="1"/>
        <end position="158"/>
    </location>
</feature>
<feature type="active site" description="Proton donor" evidence="1">
    <location>
        <position position="90"/>
    </location>
</feature>
<feature type="binding site" evidence="1">
    <location>
        <position position="24"/>
    </location>
    <ligand>
        <name>5-amino-6-(D-ribitylamino)uracil</name>
        <dbReference type="ChEBI" id="CHEBI:15934"/>
    </ligand>
</feature>
<feature type="binding site" evidence="1">
    <location>
        <begin position="58"/>
        <end position="60"/>
    </location>
    <ligand>
        <name>5-amino-6-(D-ribitylamino)uracil</name>
        <dbReference type="ChEBI" id="CHEBI:15934"/>
    </ligand>
</feature>
<feature type="binding site" evidence="1">
    <location>
        <begin position="82"/>
        <end position="84"/>
    </location>
    <ligand>
        <name>5-amino-6-(D-ribitylamino)uracil</name>
        <dbReference type="ChEBI" id="CHEBI:15934"/>
    </ligand>
</feature>
<feature type="binding site" evidence="1">
    <location>
        <begin position="87"/>
        <end position="88"/>
    </location>
    <ligand>
        <name>(2S)-2-hydroxy-3-oxobutyl phosphate</name>
        <dbReference type="ChEBI" id="CHEBI:58830"/>
    </ligand>
</feature>
<feature type="binding site" evidence="1">
    <location>
        <position position="115"/>
    </location>
    <ligand>
        <name>5-amino-6-(D-ribitylamino)uracil</name>
        <dbReference type="ChEBI" id="CHEBI:15934"/>
    </ligand>
</feature>
<feature type="binding site" evidence="1">
    <location>
        <position position="129"/>
    </location>
    <ligand>
        <name>(2S)-2-hydroxy-3-oxobutyl phosphate</name>
        <dbReference type="ChEBI" id="CHEBI:58830"/>
    </ligand>
</feature>
<keyword id="KW-0686">Riboflavin biosynthesis</keyword>
<keyword id="KW-0808">Transferase</keyword>
<accession>Q1IFM0</accession>
<dbReference type="EC" id="2.5.1.78" evidence="1"/>
<dbReference type="EMBL" id="CT573326">
    <property type="protein sequence ID" value="CAK13534.1"/>
    <property type="molecule type" value="Genomic_DNA"/>
</dbReference>
<dbReference type="SMR" id="Q1IFM0"/>
<dbReference type="STRING" id="384676.PSEEN0591"/>
<dbReference type="KEGG" id="pen:PSEEN0591"/>
<dbReference type="eggNOG" id="COG0054">
    <property type="taxonomic scope" value="Bacteria"/>
</dbReference>
<dbReference type="HOGENOM" id="CLU_089358_1_1_6"/>
<dbReference type="OrthoDB" id="9809709at2"/>
<dbReference type="UniPathway" id="UPA00275">
    <property type="reaction ID" value="UER00404"/>
</dbReference>
<dbReference type="Proteomes" id="UP000000658">
    <property type="component" value="Chromosome"/>
</dbReference>
<dbReference type="GO" id="GO:0005829">
    <property type="term" value="C:cytosol"/>
    <property type="evidence" value="ECO:0007669"/>
    <property type="project" value="TreeGrafter"/>
</dbReference>
<dbReference type="GO" id="GO:0009349">
    <property type="term" value="C:riboflavin synthase complex"/>
    <property type="evidence" value="ECO:0007669"/>
    <property type="project" value="InterPro"/>
</dbReference>
<dbReference type="GO" id="GO:0000906">
    <property type="term" value="F:6,7-dimethyl-8-ribityllumazine synthase activity"/>
    <property type="evidence" value="ECO:0007669"/>
    <property type="project" value="UniProtKB-UniRule"/>
</dbReference>
<dbReference type="GO" id="GO:0009231">
    <property type="term" value="P:riboflavin biosynthetic process"/>
    <property type="evidence" value="ECO:0007669"/>
    <property type="project" value="UniProtKB-UniRule"/>
</dbReference>
<dbReference type="CDD" id="cd09209">
    <property type="entry name" value="Lumazine_synthase-I"/>
    <property type="match status" value="1"/>
</dbReference>
<dbReference type="FunFam" id="3.40.50.960:FF:000001">
    <property type="entry name" value="6,7-dimethyl-8-ribityllumazine synthase"/>
    <property type="match status" value="1"/>
</dbReference>
<dbReference type="Gene3D" id="3.40.50.960">
    <property type="entry name" value="Lumazine/riboflavin synthase"/>
    <property type="match status" value="1"/>
</dbReference>
<dbReference type="HAMAP" id="MF_00178">
    <property type="entry name" value="Lumazine_synth"/>
    <property type="match status" value="1"/>
</dbReference>
<dbReference type="InterPro" id="IPR034964">
    <property type="entry name" value="LS"/>
</dbReference>
<dbReference type="InterPro" id="IPR002180">
    <property type="entry name" value="LS/RS"/>
</dbReference>
<dbReference type="InterPro" id="IPR036467">
    <property type="entry name" value="LS/RS_sf"/>
</dbReference>
<dbReference type="NCBIfam" id="TIGR00114">
    <property type="entry name" value="lumazine-synth"/>
    <property type="match status" value="1"/>
</dbReference>
<dbReference type="NCBIfam" id="NF000812">
    <property type="entry name" value="PRK00061.1-4"/>
    <property type="match status" value="1"/>
</dbReference>
<dbReference type="PANTHER" id="PTHR21058:SF0">
    <property type="entry name" value="6,7-DIMETHYL-8-RIBITYLLUMAZINE SYNTHASE"/>
    <property type="match status" value="1"/>
</dbReference>
<dbReference type="PANTHER" id="PTHR21058">
    <property type="entry name" value="6,7-DIMETHYL-8-RIBITYLLUMAZINE SYNTHASE DMRL SYNTHASE LUMAZINE SYNTHASE"/>
    <property type="match status" value="1"/>
</dbReference>
<dbReference type="Pfam" id="PF00885">
    <property type="entry name" value="DMRL_synthase"/>
    <property type="match status" value="1"/>
</dbReference>
<dbReference type="SUPFAM" id="SSF52121">
    <property type="entry name" value="Lumazine synthase"/>
    <property type="match status" value="1"/>
</dbReference>
<organism>
    <name type="scientific">Pseudomonas entomophila (strain L48)</name>
    <dbReference type="NCBI Taxonomy" id="384676"/>
    <lineage>
        <taxon>Bacteria</taxon>
        <taxon>Pseudomonadati</taxon>
        <taxon>Pseudomonadota</taxon>
        <taxon>Gammaproteobacteria</taxon>
        <taxon>Pseudomonadales</taxon>
        <taxon>Pseudomonadaceae</taxon>
        <taxon>Pseudomonas</taxon>
    </lineage>
</organism>
<proteinExistence type="inferred from homology"/>
<evidence type="ECO:0000255" key="1">
    <source>
        <dbReference type="HAMAP-Rule" id="MF_00178"/>
    </source>
</evidence>
<comment type="function">
    <text evidence="1">Catalyzes the formation of 6,7-dimethyl-8-ribityllumazine by condensation of 5-amino-6-(D-ribitylamino)uracil with 3,4-dihydroxy-2-butanone 4-phosphate. This is the penultimate step in the biosynthesis of riboflavin.</text>
</comment>
<comment type="catalytic activity">
    <reaction evidence="1">
        <text>(2S)-2-hydroxy-3-oxobutyl phosphate + 5-amino-6-(D-ribitylamino)uracil = 6,7-dimethyl-8-(1-D-ribityl)lumazine + phosphate + 2 H2O + H(+)</text>
        <dbReference type="Rhea" id="RHEA:26152"/>
        <dbReference type="ChEBI" id="CHEBI:15377"/>
        <dbReference type="ChEBI" id="CHEBI:15378"/>
        <dbReference type="ChEBI" id="CHEBI:15934"/>
        <dbReference type="ChEBI" id="CHEBI:43474"/>
        <dbReference type="ChEBI" id="CHEBI:58201"/>
        <dbReference type="ChEBI" id="CHEBI:58830"/>
        <dbReference type="EC" id="2.5.1.78"/>
    </reaction>
</comment>
<comment type="pathway">
    <text evidence="1">Cofactor biosynthesis; riboflavin biosynthesis; riboflavin from 2-hydroxy-3-oxobutyl phosphate and 5-amino-6-(D-ribitylamino)uracil: step 1/2.</text>
</comment>
<comment type="subunit">
    <text evidence="1">Forms an icosahedral capsid composed of 60 subunits, arranged as a dodecamer of pentamers.</text>
</comment>
<comment type="similarity">
    <text evidence="1">Belongs to the DMRL synthase family.</text>
</comment>
<gene>
    <name evidence="1" type="primary">ribH</name>
    <name type="ordered locus">PSEEN0591</name>
</gene>
<name>RISB_PSEE4</name>